<organism>
    <name type="scientific">Caenorhabditis elegans</name>
    <dbReference type="NCBI Taxonomy" id="6239"/>
    <lineage>
        <taxon>Eukaryota</taxon>
        <taxon>Metazoa</taxon>
        <taxon>Ecdysozoa</taxon>
        <taxon>Nematoda</taxon>
        <taxon>Chromadorea</taxon>
        <taxon>Rhabditida</taxon>
        <taxon>Rhabditina</taxon>
        <taxon>Rhabditomorpha</taxon>
        <taxon>Rhabditoidea</taxon>
        <taxon>Rhabditidae</taxon>
        <taxon>Peloderinae</taxon>
        <taxon>Caenorhabditis</taxon>
    </lineage>
</organism>
<reference key="1">
    <citation type="journal article" date="1998" name="Science">
        <title>Genome sequence of the nematode C. elegans: a platform for investigating biology.</title>
        <authorList>
            <consortium name="The C. elegans sequencing consortium"/>
        </authorList>
    </citation>
    <scope>NUCLEOTIDE SEQUENCE [LARGE SCALE GENOMIC DNA]</scope>
    <source>
        <strain>Bristol N2</strain>
    </source>
</reference>
<proteinExistence type="inferred from homology"/>
<accession>Q9XVH6</accession>
<evidence type="ECO:0000250" key="1"/>
<evidence type="ECO:0000305" key="2"/>
<name>RPB11_CAEEL</name>
<comment type="function">
    <text evidence="1">DNA-dependent RNA polymerase catalyzes the transcription of DNA into RNA using the four ribonucleoside triphosphates as substrates. Component of RNA polymerase II which synthesizes mRNA precursors and many functional non-coding RNAs. Pol II is the central component of the basal RNA polymerase II transcription machinery. It is composed of mobile elements that move relative to each other. RPB11 is part of the core element with the central large cleft (By similarity).</text>
</comment>
<comment type="subunit">
    <text evidence="1">Component of the RNA polymerase II (Pol II) complex consisting of 12 subunits.</text>
</comment>
<comment type="subcellular location">
    <subcellularLocation>
        <location evidence="1">Nucleus</location>
    </subcellularLocation>
</comment>
<comment type="similarity">
    <text evidence="2">Belongs to the archaeal Rpo11/eukaryotic RPB11/RPC19 RNA polymerase subunit family.</text>
</comment>
<feature type="chain" id="PRO_0000149311" description="Probable DNA-directed RNA polymerase II subunit RPB11">
    <location>
        <begin position="1"/>
        <end position="122"/>
    </location>
</feature>
<dbReference type="EMBL" id="Z81135">
    <property type="protein sequence ID" value="CAB03455.1"/>
    <property type="molecule type" value="Genomic_DNA"/>
</dbReference>
<dbReference type="PIR" id="T26065">
    <property type="entry name" value="T26065"/>
</dbReference>
<dbReference type="RefSeq" id="NP_496942.1">
    <property type="nucleotide sequence ID" value="NM_064541.6"/>
</dbReference>
<dbReference type="SMR" id="Q9XVH6"/>
<dbReference type="BioGRID" id="40340">
    <property type="interactions" value="32"/>
</dbReference>
<dbReference type="FunCoup" id="Q9XVH6">
    <property type="interactions" value="1895"/>
</dbReference>
<dbReference type="IntAct" id="Q9XVH6">
    <property type="interactions" value="3"/>
</dbReference>
<dbReference type="STRING" id="6239.W01G7.3.2"/>
<dbReference type="PaxDb" id="6239-W01G7.3.2"/>
<dbReference type="PeptideAtlas" id="Q9XVH6"/>
<dbReference type="EnsemblMetazoa" id="W01G7.3.1">
    <property type="protein sequence ID" value="W01G7.3.1"/>
    <property type="gene ID" value="WBGene00012187"/>
</dbReference>
<dbReference type="GeneID" id="175056"/>
<dbReference type="KEGG" id="cel:CELE_W01G7.3"/>
<dbReference type="AGR" id="WB:WBGene00012187"/>
<dbReference type="CTD" id="175056"/>
<dbReference type="WormBase" id="W01G7.3">
    <property type="protein sequence ID" value="CE18986"/>
    <property type="gene ID" value="WBGene00012187"/>
    <property type="gene designation" value="rpb-11"/>
</dbReference>
<dbReference type="eggNOG" id="KOG4392">
    <property type="taxonomic scope" value="Eukaryota"/>
</dbReference>
<dbReference type="GeneTree" id="ENSGT00550000074975"/>
<dbReference type="HOGENOM" id="CLU_090381_2_2_1"/>
<dbReference type="InParanoid" id="Q9XVH6"/>
<dbReference type="OMA" id="MNAPSRY"/>
<dbReference type="OrthoDB" id="10248581at2759"/>
<dbReference type="PhylomeDB" id="Q9XVH6"/>
<dbReference type="Reactome" id="R-CEL-112382">
    <property type="pathway name" value="Formation of RNA Pol II elongation complex"/>
</dbReference>
<dbReference type="Reactome" id="R-CEL-113418">
    <property type="pathway name" value="Formation of the Early Elongation Complex"/>
</dbReference>
<dbReference type="Reactome" id="R-CEL-5578749">
    <property type="pathway name" value="Transcriptional regulation by small RNAs"/>
</dbReference>
<dbReference type="Reactome" id="R-CEL-674695">
    <property type="pathway name" value="RNA Polymerase II Pre-transcription Events"/>
</dbReference>
<dbReference type="Reactome" id="R-CEL-6781823">
    <property type="pathway name" value="Formation of TC-NER Pre-Incision Complex"/>
</dbReference>
<dbReference type="Reactome" id="R-CEL-6782135">
    <property type="pathway name" value="Dual incision in TC-NER"/>
</dbReference>
<dbReference type="Reactome" id="R-CEL-6782210">
    <property type="pathway name" value="Gap-filling DNA repair synthesis and ligation in TC-NER"/>
</dbReference>
<dbReference type="Reactome" id="R-CEL-6796648">
    <property type="pathway name" value="TP53 Regulates Transcription of DNA Repair Genes"/>
</dbReference>
<dbReference type="Reactome" id="R-CEL-6803529">
    <property type="pathway name" value="FGFR2 alternative splicing"/>
</dbReference>
<dbReference type="Reactome" id="R-CEL-6807505">
    <property type="pathway name" value="RNA polymerase II transcribes snRNA genes"/>
</dbReference>
<dbReference type="Reactome" id="R-CEL-72086">
    <property type="pathway name" value="mRNA Capping"/>
</dbReference>
<dbReference type="Reactome" id="R-CEL-72163">
    <property type="pathway name" value="mRNA Splicing - Major Pathway"/>
</dbReference>
<dbReference type="Reactome" id="R-CEL-72165">
    <property type="pathway name" value="mRNA Splicing - Minor Pathway"/>
</dbReference>
<dbReference type="Reactome" id="R-CEL-72203">
    <property type="pathway name" value="Processing of Capped Intron-Containing Pre-mRNA"/>
</dbReference>
<dbReference type="Reactome" id="R-CEL-73776">
    <property type="pathway name" value="RNA Polymerase II Promoter Escape"/>
</dbReference>
<dbReference type="Reactome" id="R-CEL-73779">
    <property type="pathway name" value="RNA Polymerase II Transcription Pre-Initiation And Promoter Opening"/>
</dbReference>
<dbReference type="Reactome" id="R-CEL-75953">
    <property type="pathway name" value="RNA Polymerase II Transcription Initiation"/>
</dbReference>
<dbReference type="Reactome" id="R-CEL-75955">
    <property type="pathway name" value="RNA Polymerase II Transcription Elongation"/>
</dbReference>
<dbReference type="Reactome" id="R-CEL-76042">
    <property type="pathway name" value="RNA Polymerase II Transcription Initiation And Promoter Clearance"/>
</dbReference>
<dbReference type="Reactome" id="R-CEL-77075">
    <property type="pathway name" value="RNA Pol II CTD phosphorylation and interaction with CE"/>
</dbReference>
<dbReference type="Reactome" id="R-CEL-9018519">
    <property type="pathway name" value="Estrogen-dependent gene expression"/>
</dbReference>
<dbReference type="PRO" id="PR:Q9XVH6"/>
<dbReference type="Proteomes" id="UP000001940">
    <property type="component" value="Chromosome II"/>
</dbReference>
<dbReference type="Bgee" id="WBGene00012187">
    <property type="expression patterns" value="Expressed in germ line (C elegans) and 4 other cell types or tissues"/>
</dbReference>
<dbReference type="GO" id="GO:0005665">
    <property type="term" value="C:RNA polymerase II, core complex"/>
    <property type="evidence" value="ECO:0000318"/>
    <property type="project" value="GO_Central"/>
</dbReference>
<dbReference type="GO" id="GO:0003677">
    <property type="term" value="F:DNA binding"/>
    <property type="evidence" value="ECO:0007669"/>
    <property type="project" value="InterPro"/>
</dbReference>
<dbReference type="GO" id="GO:0003899">
    <property type="term" value="F:DNA-directed RNA polymerase activity"/>
    <property type="evidence" value="ECO:0007669"/>
    <property type="project" value="InterPro"/>
</dbReference>
<dbReference type="GO" id="GO:0046983">
    <property type="term" value="F:protein dimerization activity"/>
    <property type="evidence" value="ECO:0007669"/>
    <property type="project" value="InterPro"/>
</dbReference>
<dbReference type="GO" id="GO:0006366">
    <property type="term" value="P:transcription by RNA polymerase II"/>
    <property type="evidence" value="ECO:0000318"/>
    <property type="project" value="GO_Central"/>
</dbReference>
<dbReference type="CDD" id="cd06926">
    <property type="entry name" value="RNAP_II_RPB11"/>
    <property type="match status" value="1"/>
</dbReference>
<dbReference type="FunFam" id="3.30.1360.10:FF:000003">
    <property type="entry name" value="DNA-directed RNA polymerase II subunit RPB11"/>
    <property type="match status" value="1"/>
</dbReference>
<dbReference type="Gene3D" id="3.30.1360.10">
    <property type="entry name" value="RNA polymerase, RBP11-like subunit"/>
    <property type="match status" value="1"/>
</dbReference>
<dbReference type="HAMAP" id="MF_00261">
    <property type="entry name" value="RNApol_arch_Rpo11"/>
    <property type="match status" value="1"/>
</dbReference>
<dbReference type="InterPro" id="IPR037685">
    <property type="entry name" value="RBP11"/>
</dbReference>
<dbReference type="InterPro" id="IPR036603">
    <property type="entry name" value="RBP11-like"/>
</dbReference>
<dbReference type="InterPro" id="IPR009025">
    <property type="entry name" value="RBP11-like_dimer"/>
</dbReference>
<dbReference type="InterPro" id="IPR008193">
    <property type="entry name" value="RNA_pol_Rpb11_13-16kDa_CS"/>
</dbReference>
<dbReference type="InterPro" id="IPR022905">
    <property type="entry name" value="Rpo11-like"/>
</dbReference>
<dbReference type="PANTHER" id="PTHR13946">
    <property type="entry name" value="DNA-DIRECTED RNA POLYMERASE I,II,III"/>
    <property type="match status" value="1"/>
</dbReference>
<dbReference type="PANTHER" id="PTHR13946:SF16">
    <property type="entry name" value="DNA-DIRECTED RNA POLYMERASE II SUBUNIT RPB11"/>
    <property type="match status" value="1"/>
</dbReference>
<dbReference type="Pfam" id="PF13656">
    <property type="entry name" value="RNA_pol_L_2"/>
    <property type="match status" value="1"/>
</dbReference>
<dbReference type="SUPFAM" id="SSF55257">
    <property type="entry name" value="RBP11-like subunits of RNA polymerase"/>
    <property type="match status" value="1"/>
</dbReference>
<dbReference type="PROSITE" id="PS01154">
    <property type="entry name" value="RNA_POL_L_13KD"/>
    <property type="match status" value="1"/>
</dbReference>
<gene>
    <name type="primary">rpb-11</name>
    <name type="ORF">W01G7.3</name>
</gene>
<keyword id="KW-0240">DNA-directed RNA polymerase</keyword>
<keyword id="KW-0539">Nucleus</keyword>
<keyword id="KW-1185">Reference proteome</keyword>
<keyword id="KW-0804">Transcription</keyword>
<protein>
    <recommendedName>
        <fullName>Probable DNA-directed RNA polymerase II subunit RPB11</fullName>
        <shortName>RNA polymerase II subunit B11</shortName>
    </recommendedName>
    <alternativeName>
        <fullName>DNA-directed RNA polymerase II subunit J</fullName>
    </alternativeName>
</protein>
<sequence>MNAPAAFESFLLLDDKKFYIEKDTKVPNAAIFTIMKEDHTLGNMLKIQLLKDPEVLFAGYKNPHPLEHKILLRIQTTNNTTPADALTTAITDLVGELSLLEHRIDAAIKKCTQSGDQERGYN</sequence>